<keyword id="KW-0004">4Fe-4S</keyword>
<keyword id="KW-0013">ADP-ribosylation</keyword>
<keyword id="KW-0067">ATP-binding</keyword>
<keyword id="KW-0408">Iron</keyword>
<keyword id="KW-0411">Iron-sulfur</keyword>
<keyword id="KW-0479">Metal-binding</keyword>
<keyword id="KW-0535">Nitrogen fixation</keyword>
<keyword id="KW-0547">Nucleotide-binding</keyword>
<keyword id="KW-0560">Oxidoreductase</keyword>
<keyword id="KW-1185">Reference proteome</keyword>
<organism>
    <name type="scientific">Gloeothece citriformis (strain PCC 7424)</name>
    <name type="common">Cyanothece sp. (strain PCC 7424)</name>
    <dbReference type="NCBI Taxonomy" id="65393"/>
    <lineage>
        <taxon>Bacteria</taxon>
        <taxon>Bacillati</taxon>
        <taxon>Cyanobacteriota</taxon>
        <taxon>Cyanophyceae</taxon>
        <taxon>Oscillatoriophycideae</taxon>
        <taxon>Chroococcales</taxon>
        <taxon>Aphanothecaceae</taxon>
        <taxon>Gloeothece</taxon>
        <taxon>Gloeothece citriformis</taxon>
    </lineage>
</organism>
<dbReference type="EC" id="1.18.6.1" evidence="1"/>
<dbReference type="EMBL" id="CP001291">
    <property type="protein sequence ID" value="ACK70547.1"/>
    <property type="molecule type" value="Genomic_DNA"/>
</dbReference>
<dbReference type="RefSeq" id="WP_015954153.1">
    <property type="nucleotide sequence ID" value="NC_011729.1"/>
</dbReference>
<dbReference type="SMR" id="B7KG76"/>
<dbReference type="STRING" id="65393.PCC7424_2120"/>
<dbReference type="KEGG" id="cyc:PCC7424_2120"/>
<dbReference type="eggNOG" id="COG1348">
    <property type="taxonomic scope" value="Bacteria"/>
</dbReference>
<dbReference type="HOGENOM" id="CLU_059373_0_0_3"/>
<dbReference type="OrthoDB" id="9778641at2"/>
<dbReference type="Proteomes" id="UP000002384">
    <property type="component" value="Chromosome"/>
</dbReference>
<dbReference type="GO" id="GO:0051539">
    <property type="term" value="F:4 iron, 4 sulfur cluster binding"/>
    <property type="evidence" value="ECO:0007669"/>
    <property type="project" value="UniProtKB-KW"/>
</dbReference>
<dbReference type="GO" id="GO:0005524">
    <property type="term" value="F:ATP binding"/>
    <property type="evidence" value="ECO:0007669"/>
    <property type="project" value="UniProtKB-UniRule"/>
</dbReference>
<dbReference type="GO" id="GO:0046872">
    <property type="term" value="F:metal ion binding"/>
    <property type="evidence" value="ECO:0007669"/>
    <property type="project" value="UniProtKB-KW"/>
</dbReference>
<dbReference type="GO" id="GO:0016163">
    <property type="term" value="F:nitrogenase activity"/>
    <property type="evidence" value="ECO:0007669"/>
    <property type="project" value="UniProtKB-UniRule"/>
</dbReference>
<dbReference type="GO" id="GO:0009399">
    <property type="term" value="P:nitrogen fixation"/>
    <property type="evidence" value="ECO:0007669"/>
    <property type="project" value="UniProtKB-UniRule"/>
</dbReference>
<dbReference type="CDD" id="cd02040">
    <property type="entry name" value="NifH"/>
    <property type="match status" value="1"/>
</dbReference>
<dbReference type="FunFam" id="3.40.50.300:FF:001379">
    <property type="entry name" value="Nitrogenase iron protein 1"/>
    <property type="match status" value="1"/>
</dbReference>
<dbReference type="Gene3D" id="3.40.50.300">
    <property type="entry name" value="P-loop containing nucleotide triphosphate hydrolases"/>
    <property type="match status" value="1"/>
</dbReference>
<dbReference type="HAMAP" id="MF_00533">
    <property type="entry name" value="NifH"/>
    <property type="match status" value="1"/>
</dbReference>
<dbReference type="InterPro" id="IPR030655">
    <property type="entry name" value="NifH/chlL_CS"/>
</dbReference>
<dbReference type="InterPro" id="IPR000392">
    <property type="entry name" value="NifH/frxC"/>
</dbReference>
<dbReference type="InterPro" id="IPR005977">
    <property type="entry name" value="Nitrogenase_Fe_NifH"/>
</dbReference>
<dbReference type="InterPro" id="IPR027417">
    <property type="entry name" value="P-loop_NTPase"/>
</dbReference>
<dbReference type="NCBIfam" id="TIGR01287">
    <property type="entry name" value="nifH"/>
    <property type="match status" value="1"/>
</dbReference>
<dbReference type="PANTHER" id="PTHR42864">
    <property type="entry name" value="LIGHT-INDEPENDENT PROTOCHLOROPHYLLIDE REDUCTASE IRON-SULFUR ATP-BINDING PROTEIN"/>
    <property type="match status" value="1"/>
</dbReference>
<dbReference type="PANTHER" id="PTHR42864:SF2">
    <property type="entry name" value="LIGHT-INDEPENDENT PROTOCHLOROPHYLLIDE REDUCTASE IRON-SULFUR ATP-BINDING PROTEIN"/>
    <property type="match status" value="1"/>
</dbReference>
<dbReference type="Pfam" id="PF00142">
    <property type="entry name" value="Fer4_NifH"/>
    <property type="match status" value="1"/>
</dbReference>
<dbReference type="PIRSF" id="PIRSF000363">
    <property type="entry name" value="Nitrogenase_iron"/>
    <property type="match status" value="1"/>
</dbReference>
<dbReference type="PRINTS" id="PR00091">
    <property type="entry name" value="NITROGNASEII"/>
</dbReference>
<dbReference type="SUPFAM" id="SSF52540">
    <property type="entry name" value="P-loop containing nucleoside triphosphate hydrolases"/>
    <property type="match status" value="1"/>
</dbReference>
<dbReference type="PROSITE" id="PS00746">
    <property type="entry name" value="NIFH_FRXC_1"/>
    <property type="match status" value="1"/>
</dbReference>
<dbReference type="PROSITE" id="PS00692">
    <property type="entry name" value="NIFH_FRXC_2"/>
    <property type="match status" value="1"/>
</dbReference>
<dbReference type="PROSITE" id="PS51026">
    <property type="entry name" value="NIFH_FRXC_3"/>
    <property type="match status" value="1"/>
</dbReference>
<name>NIFH_GLOC7</name>
<gene>
    <name evidence="1" type="primary">nifH</name>
    <name type="ordered locus">PCC7424_2120</name>
</gene>
<sequence length="299" mass="32723">MRQIAFYGKGGIGKSTTSQNTLAGMAQNGNRIMIVGCDPKADSTRLILNTKAQVTVLHLAAERGAVEDLELEDVLLQGFADIKCVESGGPEPGVGCAGRGIITAINFLEEEGAYEDLDFVSYDVLGDVVCGGFAMPIREGKAQEIYIVTSGEMMAMYAANNIARGILKYAHTGGVRLGGLICNSRNVNRETDLIEELADRLNTQMIHFVPRSKQVQEAELRRMTVIQYSPDHPQADEYRTLAKKIEENTKLTIPTPIDNDTLEELLINYGLLGSEEEYKKVMEADMATQALTRATSINK</sequence>
<evidence type="ECO:0000255" key="1">
    <source>
        <dbReference type="HAMAP-Rule" id="MF_00533"/>
    </source>
</evidence>
<accession>B7KG76</accession>
<comment type="function">
    <text evidence="1">The key enzymatic reactions in nitrogen fixation are catalyzed by the nitrogenase complex, which has 2 components: the iron protein and the molybdenum-iron protein.</text>
</comment>
<comment type="catalytic activity">
    <reaction evidence="1">
        <text>N2 + 8 reduced [2Fe-2S]-[ferredoxin] + 16 ATP + 16 H2O = H2 + 8 oxidized [2Fe-2S]-[ferredoxin] + 2 NH4(+) + 16 ADP + 16 phosphate + 6 H(+)</text>
        <dbReference type="Rhea" id="RHEA:21448"/>
        <dbReference type="Rhea" id="RHEA-COMP:10000"/>
        <dbReference type="Rhea" id="RHEA-COMP:10001"/>
        <dbReference type="ChEBI" id="CHEBI:15377"/>
        <dbReference type="ChEBI" id="CHEBI:15378"/>
        <dbReference type="ChEBI" id="CHEBI:17997"/>
        <dbReference type="ChEBI" id="CHEBI:18276"/>
        <dbReference type="ChEBI" id="CHEBI:28938"/>
        <dbReference type="ChEBI" id="CHEBI:30616"/>
        <dbReference type="ChEBI" id="CHEBI:33737"/>
        <dbReference type="ChEBI" id="CHEBI:33738"/>
        <dbReference type="ChEBI" id="CHEBI:43474"/>
        <dbReference type="ChEBI" id="CHEBI:456216"/>
        <dbReference type="EC" id="1.18.6.1"/>
    </reaction>
</comment>
<comment type="cofactor">
    <cofactor evidence="1">
        <name>[4Fe-4S] cluster</name>
        <dbReference type="ChEBI" id="CHEBI:49883"/>
    </cofactor>
    <text evidence="1">Binds 1 [4Fe-4S] cluster per dimer.</text>
</comment>
<comment type="subunit">
    <text evidence="1">Homodimer.</text>
</comment>
<comment type="PTM">
    <text evidence="1">The reversible ADP-ribosylation of Arg-99 inactivates the nitrogenase reductase and regulates nitrogenase activity.</text>
</comment>
<comment type="similarity">
    <text evidence="1">Belongs to the NifH/BchL/ChlL family.</text>
</comment>
<feature type="chain" id="PRO_1000211860" description="Nitrogenase iron protein">
    <location>
        <begin position="1"/>
        <end position="299"/>
    </location>
</feature>
<feature type="binding site" evidence="1">
    <location>
        <begin position="8"/>
        <end position="15"/>
    </location>
    <ligand>
        <name>ATP</name>
        <dbReference type="ChEBI" id="CHEBI:30616"/>
    </ligand>
</feature>
<feature type="binding site" evidence="1">
    <location>
        <position position="96"/>
    </location>
    <ligand>
        <name>[4Fe-4S] cluster</name>
        <dbReference type="ChEBI" id="CHEBI:49883"/>
        <note>ligand shared between dimeric partners</note>
    </ligand>
</feature>
<feature type="binding site" evidence="1">
    <location>
        <position position="130"/>
    </location>
    <ligand>
        <name>[4Fe-4S] cluster</name>
        <dbReference type="ChEBI" id="CHEBI:49883"/>
        <note>ligand shared between dimeric partners</note>
    </ligand>
</feature>
<feature type="modified residue" description="ADP-ribosylarginine; by dinitrogenase reductase ADP-ribosyltransferase" evidence="1">
    <location>
        <position position="99"/>
    </location>
</feature>
<reference key="1">
    <citation type="journal article" date="2011" name="MBio">
        <title>Novel metabolic attributes of the genus Cyanothece, comprising a group of unicellular nitrogen-fixing Cyanobacteria.</title>
        <authorList>
            <person name="Bandyopadhyay A."/>
            <person name="Elvitigala T."/>
            <person name="Welsh E."/>
            <person name="Stockel J."/>
            <person name="Liberton M."/>
            <person name="Min H."/>
            <person name="Sherman L.A."/>
            <person name="Pakrasi H.B."/>
        </authorList>
    </citation>
    <scope>NUCLEOTIDE SEQUENCE [LARGE SCALE GENOMIC DNA]</scope>
    <source>
        <strain>PCC 7424</strain>
    </source>
</reference>
<proteinExistence type="inferred from homology"/>
<protein>
    <recommendedName>
        <fullName evidence="1">Nitrogenase iron protein</fullName>
        <ecNumber evidence="1">1.18.6.1</ecNumber>
    </recommendedName>
    <alternativeName>
        <fullName evidence="1">Nitrogenase Fe protein</fullName>
    </alternativeName>
    <alternativeName>
        <fullName evidence="1">Nitrogenase component II</fullName>
    </alternativeName>
    <alternativeName>
        <fullName evidence="1">Nitrogenase reductase</fullName>
    </alternativeName>
</protein>